<gene>
    <name evidence="1" type="primary">surE</name>
    <name type="ordered locus">NMA1693</name>
</gene>
<feature type="chain" id="PRO_0000111822" description="5'-nucleotidase SurE">
    <location>
        <begin position="1"/>
        <end position="248"/>
    </location>
</feature>
<feature type="binding site" evidence="1">
    <location>
        <position position="8"/>
    </location>
    <ligand>
        <name>a divalent metal cation</name>
        <dbReference type="ChEBI" id="CHEBI:60240"/>
    </ligand>
</feature>
<feature type="binding site" evidence="1">
    <location>
        <position position="9"/>
    </location>
    <ligand>
        <name>a divalent metal cation</name>
        <dbReference type="ChEBI" id="CHEBI:60240"/>
    </ligand>
</feature>
<feature type="binding site" evidence="1">
    <location>
        <position position="39"/>
    </location>
    <ligand>
        <name>a divalent metal cation</name>
        <dbReference type="ChEBI" id="CHEBI:60240"/>
    </ligand>
</feature>
<feature type="binding site" evidence="1">
    <location>
        <position position="91"/>
    </location>
    <ligand>
        <name>a divalent metal cation</name>
        <dbReference type="ChEBI" id="CHEBI:60240"/>
    </ligand>
</feature>
<dbReference type="EC" id="3.1.3.5" evidence="1"/>
<dbReference type="EMBL" id="AL157959">
    <property type="protein sequence ID" value="CAM08823.1"/>
    <property type="molecule type" value="Genomic_DNA"/>
</dbReference>
<dbReference type="PIR" id="H81864">
    <property type="entry name" value="H81864"/>
</dbReference>
<dbReference type="RefSeq" id="WP_002246284.1">
    <property type="nucleotide sequence ID" value="NC_003116.1"/>
</dbReference>
<dbReference type="SMR" id="Q9JTP0"/>
<dbReference type="EnsemblBacteria" id="CAM08823">
    <property type="protein sequence ID" value="CAM08823"/>
    <property type="gene ID" value="NMA1693"/>
</dbReference>
<dbReference type="KEGG" id="nma:NMA1693"/>
<dbReference type="HOGENOM" id="CLU_045192_1_2_4"/>
<dbReference type="Proteomes" id="UP000000626">
    <property type="component" value="Chromosome"/>
</dbReference>
<dbReference type="GO" id="GO:0005737">
    <property type="term" value="C:cytoplasm"/>
    <property type="evidence" value="ECO:0007669"/>
    <property type="project" value="UniProtKB-SubCell"/>
</dbReference>
<dbReference type="GO" id="GO:0008254">
    <property type="term" value="F:3'-nucleotidase activity"/>
    <property type="evidence" value="ECO:0007669"/>
    <property type="project" value="TreeGrafter"/>
</dbReference>
<dbReference type="GO" id="GO:0008253">
    <property type="term" value="F:5'-nucleotidase activity"/>
    <property type="evidence" value="ECO:0007669"/>
    <property type="project" value="UniProtKB-UniRule"/>
</dbReference>
<dbReference type="GO" id="GO:0004309">
    <property type="term" value="F:exopolyphosphatase activity"/>
    <property type="evidence" value="ECO:0007669"/>
    <property type="project" value="TreeGrafter"/>
</dbReference>
<dbReference type="GO" id="GO:0046872">
    <property type="term" value="F:metal ion binding"/>
    <property type="evidence" value="ECO:0007669"/>
    <property type="project" value="UniProtKB-UniRule"/>
</dbReference>
<dbReference type="GO" id="GO:0000166">
    <property type="term" value="F:nucleotide binding"/>
    <property type="evidence" value="ECO:0007669"/>
    <property type="project" value="UniProtKB-KW"/>
</dbReference>
<dbReference type="FunFam" id="3.40.1210.10:FF:000001">
    <property type="entry name" value="5'/3'-nucleotidase SurE"/>
    <property type="match status" value="1"/>
</dbReference>
<dbReference type="Gene3D" id="3.40.1210.10">
    <property type="entry name" value="Survival protein SurE-like phosphatase/nucleotidase"/>
    <property type="match status" value="1"/>
</dbReference>
<dbReference type="HAMAP" id="MF_00060">
    <property type="entry name" value="SurE"/>
    <property type="match status" value="1"/>
</dbReference>
<dbReference type="InterPro" id="IPR030048">
    <property type="entry name" value="SurE"/>
</dbReference>
<dbReference type="InterPro" id="IPR002828">
    <property type="entry name" value="SurE-like_Pase/nucleotidase"/>
</dbReference>
<dbReference type="InterPro" id="IPR036523">
    <property type="entry name" value="SurE-like_sf"/>
</dbReference>
<dbReference type="NCBIfam" id="NF001489">
    <property type="entry name" value="PRK00346.1-3"/>
    <property type="match status" value="1"/>
</dbReference>
<dbReference type="NCBIfam" id="NF001490">
    <property type="entry name" value="PRK00346.1-4"/>
    <property type="match status" value="1"/>
</dbReference>
<dbReference type="NCBIfam" id="TIGR00087">
    <property type="entry name" value="surE"/>
    <property type="match status" value="1"/>
</dbReference>
<dbReference type="PANTHER" id="PTHR30457">
    <property type="entry name" value="5'-NUCLEOTIDASE SURE"/>
    <property type="match status" value="1"/>
</dbReference>
<dbReference type="PANTHER" id="PTHR30457:SF12">
    <property type="entry name" value="5'_3'-NUCLEOTIDASE SURE"/>
    <property type="match status" value="1"/>
</dbReference>
<dbReference type="Pfam" id="PF01975">
    <property type="entry name" value="SurE"/>
    <property type="match status" value="1"/>
</dbReference>
<dbReference type="SUPFAM" id="SSF64167">
    <property type="entry name" value="SurE-like"/>
    <property type="match status" value="1"/>
</dbReference>
<name>SURE_NEIMA</name>
<reference key="1">
    <citation type="journal article" date="2000" name="Nature">
        <title>Complete DNA sequence of a serogroup A strain of Neisseria meningitidis Z2491.</title>
        <authorList>
            <person name="Parkhill J."/>
            <person name="Achtman M."/>
            <person name="James K.D."/>
            <person name="Bentley S.D."/>
            <person name="Churcher C.M."/>
            <person name="Klee S.R."/>
            <person name="Morelli G."/>
            <person name="Basham D."/>
            <person name="Brown D."/>
            <person name="Chillingworth T."/>
            <person name="Davies R.M."/>
            <person name="Davis P."/>
            <person name="Devlin K."/>
            <person name="Feltwell T."/>
            <person name="Hamlin N."/>
            <person name="Holroyd S."/>
            <person name="Jagels K."/>
            <person name="Leather S."/>
            <person name="Moule S."/>
            <person name="Mungall K.L."/>
            <person name="Quail M.A."/>
            <person name="Rajandream M.A."/>
            <person name="Rutherford K.M."/>
            <person name="Simmonds M."/>
            <person name="Skelton J."/>
            <person name="Whitehead S."/>
            <person name="Spratt B.G."/>
            <person name="Barrell B.G."/>
        </authorList>
    </citation>
    <scope>NUCLEOTIDE SEQUENCE [LARGE SCALE GENOMIC DNA]</scope>
    <source>
        <strain>DSM 15465 / Z2491</strain>
    </source>
</reference>
<proteinExistence type="inferred from homology"/>
<comment type="function">
    <text evidence="1">Nucleotidase that shows phosphatase activity on nucleoside 5'-monophosphates.</text>
</comment>
<comment type="catalytic activity">
    <reaction evidence="1">
        <text>a ribonucleoside 5'-phosphate + H2O = a ribonucleoside + phosphate</text>
        <dbReference type="Rhea" id="RHEA:12484"/>
        <dbReference type="ChEBI" id="CHEBI:15377"/>
        <dbReference type="ChEBI" id="CHEBI:18254"/>
        <dbReference type="ChEBI" id="CHEBI:43474"/>
        <dbReference type="ChEBI" id="CHEBI:58043"/>
        <dbReference type="EC" id="3.1.3.5"/>
    </reaction>
</comment>
<comment type="cofactor">
    <cofactor evidence="1">
        <name>a divalent metal cation</name>
        <dbReference type="ChEBI" id="CHEBI:60240"/>
    </cofactor>
    <text evidence="1">Binds 1 divalent metal cation per subunit.</text>
</comment>
<comment type="subcellular location">
    <subcellularLocation>
        <location evidence="1">Cytoplasm</location>
    </subcellularLocation>
</comment>
<comment type="similarity">
    <text evidence="1">Belongs to the SurE nucleotidase family.</text>
</comment>
<sequence>MNVLISNDDGYLSEGIAVLARVTAEFANVRVVAPERDRSGVSNSLTLERPLQLKQAQNGFYYVNGTPTDCIHIGQSVFSDFQADFVFSGINRGANMGDDTLYSGTVAAATEAYLMGMPAVAFSLNDASGRYWATAEQALWTLLAHFFKNPPQSPILWNINIPAVAPEDVRGIKIARLGRRHHGQNVIPARNPRGEQIYWIGPVGEVSDREEGTDFGECEAGFITVTPLQIDLTAYRDMAETAVFWHTD</sequence>
<accession>Q9JTP0</accession>
<accession>A1ISR1</accession>
<protein>
    <recommendedName>
        <fullName evidence="1">5'-nucleotidase SurE</fullName>
        <ecNumber evidence="1">3.1.3.5</ecNumber>
    </recommendedName>
    <alternativeName>
        <fullName evidence="1">Nucleoside 5'-monophosphate phosphohydrolase</fullName>
    </alternativeName>
</protein>
<organism>
    <name type="scientific">Neisseria meningitidis serogroup A / serotype 4A (strain DSM 15465 / Z2491)</name>
    <dbReference type="NCBI Taxonomy" id="122587"/>
    <lineage>
        <taxon>Bacteria</taxon>
        <taxon>Pseudomonadati</taxon>
        <taxon>Pseudomonadota</taxon>
        <taxon>Betaproteobacteria</taxon>
        <taxon>Neisseriales</taxon>
        <taxon>Neisseriaceae</taxon>
        <taxon>Neisseria</taxon>
    </lineage>
</organism>
<evidence type="ECO:0000255" key="1">
    <source>
        <dbReference type="HAMAP-Rule" id="MF_00060"/>
    </source>
</evidence>
<keyword id="KW-0963">Cytoplasm</keyword>
<keyword id="KW-0378">Hydrolase</keyword>
<keyword id="KW-0479">Metal-binding</keyword>
<keyword id="KW-0547">Nucleotide-binding</keyword>